<feature type="chain" id="PRO_0000360492" description="Uncharacterized N-acetyltransferase YhfO">
    <location>
        <begin position="1"/>
        <end position="149"/>
    </location>
</feature>
<feature type="domain" description="N-acetyltransferase" evidence="1">
    <location>
        <begin position="1"/>
        <end position="149"/>
    </location>
</feature>
<gene>
    <name type="primary">yhfO</name>
    <name type="ordered locus">BSU10310</name>
</gene>
<sequence>MNIRQAKTSDAAAIAPLFNQYREFYRQASDLQGAEAFLKARLENHESVILIAEENGEFIGFTQLYPTFSSVSMKRIYILNDLFVVPHARTKGAGGRLLSAAKDYAGQNGAKCLTLQTEHHNRKARSLYEQNGYEEDTGFVHYCLNVPAK</sequence>
<organism>
    <name type="scientific">Bacillus subtilis (strain 168)</name>
    <dbReference type="NCBI Taxonomy" id="224308"/>
    <lineage>
        <taxon>Bacteria</taxon>
        <taxon>Bacillati</taxon>
        <taxon>Bacillota</taxon>
        <taxon>Bacilli</taxon>
        <taxon>Bacillales</taxon>
        <taxon>Bacillaceae</taxon>
        <taxon>Bacillus</taxon>
    </lineage>
</organism>
<reference key="1">
    <citation type="journal article" date="1998" name="Microbiology">
        <title>The 172 kb prkA-addAB region from 83 degrees to 97 degrees of the Bacillus subtilis chromosome contains several dysfunctional genes, the glyB marker, many genes encoding transporter proteins, and the ubiquitous hit gene.</title>
        <authorList>
            <person name="Noback M.A."/>
            <person name="Holsappel S."/>
            <person name="Kiewiet R."/>
            <person name="Terpstra P."/>
            <person name="Wambutt R."/>
            <person name="Wedler H."/>
            <person name="Venema G."/>
            <person name="Bron S."/>
        </authorList>
    </citation>
    <scope>NUCLEOTIDE SEQUENCE [GENOMIC DNA]</scope>
    <source>
        <strain>168</strain>
    </source>
</reference>
<reference key="2">
    <citation type="journal article" date="1997" name="Nature">
        <title>The complete genome sequence of the Gram-positive bacterium Bacillus subtilis.</title>
        <authorList>
            <person name="Kunst F."/>
            <person name="Ogasawara N."/>
            <person name="Moszer I."/>
            <person name="Albertini A.M."/>
            <person name="Alloni G."/>
            <person name="Azevedo V."/>
            <person name="Bertero M.G."/>
            <person name="Bessieres P."/>
            <person name="Bolotin A."/>
            <person name="Borchert S."/>
            <person name="Borriss R."/>
            <person name="Boursier L."/>
            <person name="Brans A."/>
            <person name="Braun M."/>
            <person name="Brignell S.C."/>
            <person name="Bron S."/>
            <person name="Brouillet S."/>
            <person name="Bruschi C.V."/>
            <person name="Caldwell B."/>
            <person name="Capuano V."/>
            <person name="Carter N.M."/>
            <person name="Choi S.-K."/>
            <person name="Codani J.-J."/>
            <person name="Connerton I.F."/>
            <person name="Cummings N.J."/>
            <person name="Daniel R.A."/>
            <person name="Denizot F."/>
            <person name="Devine K.M."/>
            <person name="Duesterhoeft A."/>
            <person name="Ehrlich S.D."/>
            <person name="Emmerson P.T."/>
            <person name="Entian K.-D."/>
            <person name="Errington J."/>
            <person name="Fabret C."/>
            <person name="Ferrari E."/>
            <person name="Foulger D."/>
            <person name="Fritz C."/>
            <person name="Fujita M."/>
            <person name="Fujita Y."/>
            <person name="Fuma S."/>
            <person name="Galizzi A."/>
            <person name="Galleron N."/>
            <person name="Ghim S.-Y."/>
            <person name="Glaser P."/>
            <person name="Goffeau A."/>
            <person name="Golightly E.J."/>
            <person name="Grandi G."/>
            <person name="Guiseppi G."/>
            <person name="Guy B.J."/>
            <person name="Haga K."/>
            <person name="Haiech J."/>
            <person name="Harwood C.R."/>
            <person name="Henaut A."/>
            <person name="Hilbert H."/>
            <person name="Holsappel S."/>
            <person name="Hosono S."/>
            <person name="Hullo M.-F."/>
            <person name="Itaya M."/>
            <person name="Jones L.-M."/>
            <person name="Joris B."/>
            <person name="Karamata D."/>
            <person name="Kasahara Y."/>
            <person name="Klaerr-Blanchard M."/>
            <person name="Klein C."/>
            <person name="Kobayashi Y."/>
            <person name="Koetter P."/>
            <person name="Koningstein G."/>
            <person name="Krogh S."/>
            <person name="Kumano M."/>
            <person name="Kurita K."/>
            <person name="Lapidus A."/>
            <person name="Lardinois S."/>
            <person name="Lauber J."/>
            <person name="Lazarevic V."/>
            <person name="Lee S.-M."/>
            <person name="Levine A."/>
            <person name="Liu H."/>
            <person name="Masuda S."/>
            <person name="Mauel C."/>
            <person name="Medigue C."/>
            <person name="Medina N."/>
            <person name="Mellado R.P."/>
            <person name="Mizuno M."/>
            <person name="Moestl D."/>
            <person name="Nakai S."/>
            <person name="Noback M."/>
            <person name="Noone D."/>
            <person name="O'Reilly M."/>
            <person name="Ogawa K."/>
            <person name="Ogiwara A."/>
            <person name="Oudega B."/>
            <person name="Park S.-H."/>
            <person name="Parro V."/>
            <person name="Pohl T.M."/>
            <person name="Portetelle D."/>
            <person name="Porwollik S."/>
            <person name="Prescott A.M."/>
            <person name="Presecan E."/>
            <person name="Pujic P."/>
            <person name="Purnelle B."/>
            <person name="Rapoport G."/>
            <person name="Rey M."/>
            <person name="Reynolds S."/>
            <person name="Rieger M."/>
            <person name="Rivolta C."/>
            <person name="Rocha E."/>
            <person name="Roche B."/>
            <person name="Rose M."/>
            <person name="Sadaie Y."/>
            <person name="Sato T."/>
            <person name="Scanlan E."/>
            <person name="Schleich S."/>
            <person name="Schroeter R."/>
            <person name="Scoffone F."/>
            <person name="Sekiguchi J."/>
            <person name="Sekowska A."/>
            <person name="Seror S.J."/>
            <person name="Serror P."/>
            <person name="Shin B.-S."/>
            <person name="Soldo B."/>
            <person name="Sorokin A."/>
            <person name="Tacconi E."/>
            <person name="Takagi T."/>
            <person name="Takahashi H."/>
            <person name="Takemaru K."/>
            <person name="Takeuchi M."/>
            <person name="Tamakoshi A."/>
            <person name="Tanaka T."/>
            <person name="Terpstra P."/>
            <person name="Tognoni A."/>
            <person name="Tosato V."/>
            <person name="Uchiyama S."/>
            <person name="Vandenbol M."/>
            <person name="Vannier F."/>
            <person name="Vassarotti A."/>
            <person name="Viari A."/>
            <person name="Wambutt R."/>
            <person name="Wedler E."/>
            <person name="Wedler H."/>
            <person name="Weitzenegger T."/>
            <person name="Winters P."/>
            <person name="Wipat A."/>
            <person name="Yamamoto H."/>
            <person name="Yamane K."/>
            <person name="Yasumoto K."/>
            <person name="Yata K."/>
            <person name="Yoshida K."/>
            <person name="Yoshikawa H.-F."/>
            <person name="Zumstein E."/>
            <person name="Yoshikawa H."/>
            <person name="Danchin A."/>
        </authorList>
    </citation>
    <scope>NUCLEOTIDE SEQUENCE [LARGE SCALE GENOMIC DNA]</scope>
    <source>
        <strain>168</strain>
    </source>
</reference>
<accession>O07614</accession>
<accession>Q796T8</accession>
<accession>Q799J4</accession>
<comment type="similarity">
    <text evidence="2">Belongs to the acetyltransferase family.</text>
</comment>
<name>YHFO_BACSU</name>
<proteinExistence type="inferred from homology"/>
<dbReference type="EC" id="2.3.1.-"/>
<dbReference type="EMBL" id="Y14083">
    <property type="protein sequence ID" value="CAA74537.1"/>
    <property type="molecule type" value="Genomic_DNA"/>
</dbReference>
<dbReference type="EMBL" id="Y14084">
    <property type="protein sequence ID" value="CAA74538.1"/>
    <property type="molecule type" value="Genomic_DNA"/>
</dbReference>
<dbReference type="EMBL" id="AL009126">
    <property type="protein sequence ID" value="CAB12871.1"/>
    <property type="molecule type" value="Genomic_DNA"/>
</dbReference>
<dbReference type="PIR" id="D69831">
    <property type="entry name" value="D69831"/>
</dbReference>
<dbReference type="RefSeq" id="NP_388912.1">
    <property type="nucleotide sequence ID" value="NC_000964.3"/>
</dbReference>
<dbReference type="RefSeq" id="WP_003233166.1">
    <property type="nucleotide sequence ID" value="NZ_OZ025638.1"/>
</dbReference>
<dbReference type="SMR" id="O07614"/>
<dbReference type="FunCoup" id="O07614">
    <property type="interactions" value="17"/>
</dbReference>
<dbReference type="STRING" id="224308.BSU10310"/>
<dbReference type="PaxDb" id="224308-BSU10310"/>
<dbReference type="DNASU" id="939778"/>
<dbReference type="EnsemblBacteria" id="CAB12871">
    <property type="protein sequence ID" value="CAB12871"/>
    <property type="gene ID" value="BSU_10310"/>
</dbReference>
<dbReference type="GeneID" id="939778"/>
<dbReference type="KEGG" id="bsu:BSU10310"/>
<dbReference type="PATRIC" id="fig|224308.179.peg.1108"/>
<dbReference type="eggNOG" id="COG0456">
    <property type="taxonomic scope" value="Bacteria"/>
</dbReference>
<dbReference type="InParanoid" id="O07614"/>
<dbReference type="OrthoDB" id="9792929at2"/>
<dbReference type="PhylomeDB" id="O07614"/>
<dbReference type="BioCyc" id="BSUB:BSU10310-MONOMER"/>
<dbReference type="Proteomes" id="UP000001570">
    <property type="component" value="Chromosome"/>
</dbReference>
<dbReference type="GO" id="GO:0016747">
    <property type="term" value="F:acyltransferase activity, transferring groups other than amino-acyl groups"/>
    <property type="evidence" value="ECO:0000318"/>
    <property type="project" value="GO_Central"/>
</dbReference>
<dbReference type="CDD" id="cd04301">
    <property type="entry name" value="NAT_SF"/>
    <property type="match status" value="1"/>
</dbReference>
<dbReference type="Gene3D" id="3.40.630.30">
    <property type="match status" value="1"/>
</dbReference>
<dbReference type="InterPro" id="IPR016181">
    <property type="entry name" value="Acyl_CoA_acyltransferase"/>
</dbReference>
<dbReference type="InterPro" id="IPR050832">
    <property type="entry name" value="Bact_Acetyltransf"/>
</dbReference>
<dbReference type="InterPro" id="IPR000182">
    <property type="entry name" value="GNAT_dom"/>
</dbReference>
<dbReference type="PANTHER" id="PTHR43877:SF2">
    <property type="entry name" value="AMINOALKYLPHOSPHONATE N-ACETYLTRANSFERASE-RELATED"/>
    <property type="match status" value="1"/>
</dbReference>
<dbReference type="PANTHER" id="PTHR43877">
    <property type="entry name" value="AMINOALKYLPHOSPHONATE N-ACETYLTRANSFERASE-RELATED-RELATED"/>
    <property type="match status" value="1"/>
</dbReference>
<dbReference type="Pfam" id="PF00583">
    <property type="entry name" value="Acetyltransf_1"/>
    <property type="match status" value="1"/>
</dbReference>
<dbReference type="SUPFAM" id="SSF55729">
    <property type="entry name" value="Acyl-CoA N-acyltransferases (Nat)"/>
    <property type="match status" value="1"/>
</dbReference>
<dbReference type="PROSITE" id="PS51186">
    <property type="entry name" value="GNAT"/>
    <property type="match status" value="1"/>
</dbReference>
<protein>
    <recommendedName>
        <fullName>Uncharacterized N-acetyltransferase YhfO</fullName>
        <ecNumber>2.3.1.-</ecNumber>
    </recommendedName>
</protein>
<keyword id="KW-0012">Acyltransferase</keyword>
<keyword id="KW-1185">Reference proteome</keyword>
<keyword id="KW-0808">Transferase</keyword>
<evidence type="ECO:0000255" key="1">
    <source>
        <dbReference type="PROSITE-ProRule" id="PRU00532"/>
    </source>
</evidence>
<evidence type="ECO:0000305" key="2"/>